<name>PSTB_THIDA</name>
<comment type="function">
    <text evidence="1">Part of the ABC transporter complex PstSACB involved in phosphate import. Responsible for energy coupling to the transport system.</text>
</comment>
<comment type="catalytic activity">
    <reaction evidence="1">
        <text>phosphate(out) + ATP + H2O = ADP + 2 phosphate(in) + H(+)</text>
        <dbReference type="Rhea" id="RHEA:24440"/>
        <dbReference type="ChEBI" id="CHEBI:15377"/>
        <dbReference type="ChEBI" id="CHEBI:15378"/>
        <dbReference type="ChEBI" id="CHEBI:30616"/>
        <dbReference type="ChEBI" id="CHEBI:43474"/>
        <dbReference type="ChEBI" id="CHEBI:456216"/>
        <dbReference type="EC" id="7.3.2.1"/>
    </reaction>
</comment>
<comment type="subunit">
    <text evidence="1">The complex is composed of two ATP-binding proteins (PstB), two transmembrane proteins (PstC and PstA) and a solute-binding protein (PstS).</text>
</comment>
<comment type="subcellular location">
    <subcellularLocation>
        <location evidence="1">Cell inner membrane</location>
        <topology evidence="1">Peripheral membrane protein</topology>
    </subcellularLocation>
</comment>
<comment type="similarity">
    <text evidence="1">Belongs to the ABC transporter superfamily. Phosphate importer (TC 3.A.1.7) family.</text>
</comment>
<keyword id="KW-0067">ATP-binding</keyword>
<keyword id="KW-0997">Cell inner membrane</keyword>
<keyword id="KW-1003">Cell membrane</keyword>
<keyword id="KW-0472">Membrane</keyword>
<keyword id="KW-0547">Nucleotide-binding</keyword>
<keyword id="KW-0592">Phosphate transport</keyword>
<keyword id="KW-1185">Reference proteome</keyword>
<keyword id="KW-1278">Translocase</keyword>
<keyword id="KW-0813">Transport</keyword>
<dbReference type="EC" id="7.3.2.1" evidence="1"/>
<dbReference type="EMBL" id="CP000116">
    <property type="protein sequence ID" value="AAZ97092.1"/>
    <property type="molecule type" value="Genomic_DNA"/>
</dbReference>
<dbReference type="RefSeq" id="WP_011311651.1">
    <property type="nucleotide sequence ID" value="NC_007404.1"/>
</dbReference>
<dbReference type="SMR" id="Q3SJQ8"/>
<dbReference type="STRING" id="292415.Tbd_1139"/>
<dbReference type="KEGG" id="tbd:Tbd_1139"/>
<dbReference type="eggNOG" id="COG1117">
    <property type="taxonomic scope" value="Bacteria"/>
</dbReference>
<dbReference type="HOGENOM" id="CLU_000604_1_22_4"/>
<dbReference type="OrthoDB" id="9802264at2"/>
<dbReference type="Proteomes" id="UP000008291">
    <property type="component" value="Chromosome"/>
</dbReference>
<dbReference type="GO" id="GO:0005886">
    <property type="term" value="C:plasma membrane"/>
    <property type="evidence" value="ECO:0007669"/>
    <property type="project" value="UniProtKB-SubCell"/>
</dbReference>
<dbReference type="GO" id="GO:0005524">
    <property type="term" value="F:ATP binding"/>
    <property type="evidence" value="ECO:0007669"/>
    <property type="project" value="UniProtKB-KW"/>
</dbReference>
<dbReference type="GO" id="GO:0016887">
    <property type="term" value="F:ATP hydrolysis activity"/>
    <property type="evidence" value="ECO:0007669"/>
    <property type="project" value="InterPro"/>
</dbReference>
<dbReference type="GO" id="GO:0015415">
    <property type="term" value="F:ATPase-coupled phosphate ion transmembrane transporter activity"/>
    <property type="evidence" value="ECO:0007669"/>
    <property type="project" value="UniProtKB-EC"/>
</dbReference>
<dbReference type="GO" id="GO:0035435">
    <property type="term" value="P:phosphate ion transmembrane transport"/>
    <property type="evidence" value="ECO:0007669"/>
    <property type="project" value="InterPro"/>
</dbReference>
<dbReference type="CDD" id="cd03260">
    <property type="entry name" value="ABC_PstB_phosphate_transporter"/>
    <property type="match status" value="1"/>
</dbReference>
<dbReference type="FunFam" id="3.40.50.300:FF:000132">
    <property type="entry name" value="Phosphate import ATP-binding protein PstB"/>
    <property type="match status" value="1"/>
</dbReference>
<dbReference type="Gene3D" id="3.40.50.300">
    <property type="entry name" value="P-loop containing nucleotide triphosphate hydrolases"/>
    <property type="match status" value="1"/>
</dbReference>
<dbReference type="InterPro" id="IPR003593">
    <property type="entry name" value="AAA+_ATPase"/>
</dbReference>
<dbReference type="InterPro" id="IPR003439">
    <property type="entry name" value="ABC_transporter-like_ATP-bd"/>
</dbReference>
<dbReference type="InterPro" id="IPR017871">
    <property type="entry name" value="ABC_transporter-like_CS"/>
</dbReference>
<dbReference type="InterPro" id="IPR027417">
    <property type="entry name" value="P-loop_NTPase"/>
</dbReference>
<dbReference type="InterPro" id="IPR005670">
    <property type="entry name" value="PstB-like"/>
</dbReference>
<dbReference type="NCBIfam" id="TIGR00972">
    <property type="entry name" value="3a0107s01c2"/>
    <property type="match status" value="1"/>
</dbReference>
<dbReference type="PANTHER" id="PTHR43423">
    <property type="entry name" value="ABC TRANSPORTER I FAMILY MEMBER 17"/>
    <property type="match status" value="1"/>
</dbReference>
<dbReference type="PANTHER" id="PTHR43423:SF3">
    <property type="entry name" value="PHOSPHATE IMPORT ATP-BINDING PROTEIN PSTB"/>
    <property type="match status" value="1"/>
</dbReference>
<dbReference type="Pfam" id="PF00005">
    <property type="entry name" value="ABC_tran"/>
    <property type="match status" value="1"/>
</dbReference>
<dbReference type="SMART" id="SM00382">
    <property type="entry name" value="AAA"/>
    <property type="match status" value="1"/>
</dbReference>
<dbReference type="SUPFAM" id="SSF52540">
    <property type="entry name" value="P-loop containing nucleoside triphosphate hydrolases"/>
    <property type="match status" value="1"/>
</dbReference>
<dbReference type="PROSITE" id="PS00211">
    <property type="entry name" value="ABC_TRANSPORTER_1"/>
    <property type="match status" value="1"/>
</dbReference>
<dbReference type="PROSITE" id="PS50893">
    <property type="entry name" value="ABC_TRANSPORTER_2"/>
    <property type="match status" value="1"/>
</dbReference>
<dbReference type="PROSITE" id="PS51238">
    <property type="entry name" value="PSTB"/>
    <property type="match status" value="1"/>
</dbReference>
<sequence length="260" mass="29162">MSDQVMPTGQNPALQIRNLDFFYGDFKGLKNVNLDIAQKKVTAFIGPSGCGKSTLLRTFNRMYDLYPGQRAEGEILFHGKNLLEKSQDVNLVRAKIGMVFQKPTPFPMTIYENIAFGVRLYQRMSGSAMDDRVEWALKKAALWGEVKDKLNQSGLSLSGGQQQRLCIARAVAVKPEIVLLDEPTSALDPISTAKIEELINELKSDYTIAIVTHNMQQAARISDYTAFMYLGELIEFNETGTIFMRPGKKQTEDYITGRFG</sequence>
<reference key="1">
    <citation type="journal article" date="2006" name="J. Bacteriol.">
        <title>The genome sequence of the obligately chemolithoautotrophic, facultatively anaerobic bacterium Thiobacillus denitrificans.</title>
        <authorList>
            <person name="Beller H.R."/>
            <person name="Chain P.S."/>
            <person name="Letain T.E."/>
            <person name="Chakicherla A."/>
            <person name="Larimer F.W."/>
            <person name="Richardson P.M."/>
            <person name="Coleman M.A."/>
            <person name="Wood A.P."/>
            <person name="Kelly D.P."/>
        </authorList>
    </citation>
    <scope>NUCLEOTIDE SEQUENCE [LARGE SCALE GENOMIC DNA]</scope>
    <source>
        <strain>ATCC 25259 / T1</strain>
    </source>
</reference>
<evidence type="ECO:0000255" key="1">
    <source>
        <dbReference type="HAMAP-Rule" id="MF_01702"/>
    </source>
</evidence>
<feature type="chain" id="PRO_0000272567" description="Phosphate import ATP-binding protein PstB">
    <location>
        <begin position="1"/>
        <end position="260"/>
    </location>
</feature>
<feature type="domain" description="ABC transporter" evidence="1">
    <location>
        <begin position="14"/>
        <end position="255"/>
    </location>
</feature>
<feature type="binding site" evidence="1">
    <location>
        <begin position="46"/>
        <end position="53"/>
    </location>
    <ligand>
        <name>ATP</name>
        <dbReference type="ChEBI" id="CHEBI:30616"/>
    </ligand>
</feature>
<organism>
    <name type="scientific">Thiobacillus denitrificans (strain ATCC 25259 / T1)</name>
    <dbReference type="NCBI Taxonomy" id="292415"/>
    <lineage>
        <taxon>Bacteria</taxon>
        <taxon>Pseudomonadati</taxon>
        <taxon>Pseudomonadota</taxon>
        <taxon>Betaproteobacteria</taxon>
        <taxon>Nitrosomonadales</taxon>
        <taxon>Thiobacillaceae</taxon>
        <taxon>Thiobacillus</taxon>
    </lineage>
</organism>
<protein>
    <recommendedName>
        <fullName evidence="1">Phosphate import ATP-binding protein PstB</fullName>
        <ecNumber evidence="1">7.3.2.1</ecNumber>
    </recommendedName>
    <alternativeName>
        <fullName evidence="1">ABC phosphate transporter</fullName>
    </alternativeName>
    <alternativeName>
        <fullName evidence="1">Phosphate-transporting ATPase</fullName>
    </alternativeName>
</protein>
<accession>Q3SJQ8</accession>
<gene>
    <name evidence="1" type="primary">pstB</name>
    <name type="ordered locus">Tbd_1139</name>
</gene>
<proteinExistence type="inferred from homology"/>